<evidence type="ECO:0000255" key="1">
    <source>
        <dbReference type="HAMAP-Rule" id="MF_00332"/>
    </source>
</evidence>
<evidence type="ECO:0000256" key="2">
    <source>
        <dbReference type="SAM" id="MobiDB-lite"/>
    </source>
</evidence>
<accession>Q0W874</accession>
<gene>
    <name evidence="1" type="primary">dnaK</name>
    <name type="ordered locus">UNCMA_27580</name>
    <name type="ORF">LRC471</name>
</gene>
<keyword id="KW-0067">ATP-binding</keyword>
<keyword id="KW-0143">Chaperone</keyword>
<keyword id="KW-0547">Nucleotide-binding</keyword>
<keyword id="KW-1185">Reference proteome</keyword>
<sequence>MSKILGIDLGTSNSEAAIMEGGKPVIIPSAEGARMFPSVVAFTKTGERLVGEAARRQAVTNPERTIIAIKRKMGTDYKVEIDGKKYTPQEISAMILQKIKQDAEAYIGEKITKAVITVPAYFNDNQRQATKDAGTIAGLEVLRVINEPTAAALAFGLDKKGSQKILVFDLGGGTLDVTIMEMGDGVFEVLSTSGDTQLGGTDMDNKIIDYIASQFKKDTGIDLRNDKMAMQRLRDAAEKAKIELSSTLQTQVNLPFITADASGPKHLDMMLTRATLEELVREVVERCYAPMRQAISDAKLTANQIDRIILVGGPTRMPIIIETIKKFFGKEPERGIDPMECVAMGASIQGGVLAGEVKDLLLLDVTPLSLGIETLGNVATRLIERNTTIPTRKSQVFSTAADNQTSVEIHVIQGERPMAYDNTTLGRFHLIGIPPAPRGIPQIEVTFDIDANGILNVKAKDLGTGKEQAITITASTKLDKSDIERMVKDAEKFAAEDAAKKEKAEVMNQADTLLYSAEKTLADAGDKITADQKERVTKGSDALREAQKTGDIEKIKAATADLTKTMNEVATVLYQAAQQQYQQQQAAEQAAQQQSGGQQASGSNPGKDPNVVDADYEVVNDKK</sequence>
<feature type="chain" id="PRO_1000059694" description="Chaperone protein DnaK">
    <location>
        <begin position="1"/>
        <end position="623"/>
    </location>
</feature>
<feature type="region of interest" description="Disordered" evidence="2">
    <location>
        <begin position="582"/>
        <end position="623"/>
    </location>
</feature>
<feature type="compositionally biased region" description="Low complexity" evidence="2">
    <location>
        <begin position="582"/>
        <end position="603"/>
    </location>
</feature>
<feature type="compositionally biased region" description="Acidic residues" evidence="2">
    <location>
        <begin position="614"/>
        <end position="623"/>
    </location>
</feature>
<comment type="function">
    <text evidence="1">Acts as a chaperone.</text>
</comment>
<comment type="similarity">
    <text evidence="1">Belongs to the heat shock protein 70 family.</text>
</comment>
<dbReference type="EMBL" id="AM114193">
    <property type="protein sequence ID" value="CAJ35419.1"/>
    <property type="molecule type" value="Genomic_DNA"/>
</dbReference>
<dbReference type="RefSeq" id="WP_012037073.1">
    <property type="nucleotide sequence ID" value="NC_009464.1"/>
</dbReference>
<dbReference type="SMR" id="Q0W874"/>
<dbReference type="STRING" id="351160.LRC471"/>
<dbReference type="GeneID" id="5143960"/>
<dbReference type="KEGG" id="rci:LRC471"/>
<dbReference type="PATRIC" id="fig|351160.9.peg.2823"/>
<dbReference type="eggNOG" id="arCOG03060">
    <property type="taxonomic scope" value="Archaea"/>
</dbReference>
<dbReference type="OrthoDB" id="9944at2157"/>
<dbReference type="Proteomes" id="UP000000663">
    <property type="component" value="Chromosome"/>
</dbReference>
<dbReference type="GO" id="GO:0005524">
    <property type="term" value="F:ATP binding"/>
    <property type="evidence" value="ECO:0007669"/>
    <property type="project" value="UniProtKB-UniRule"/>
</dbReference>
<dbReference type="GO" id="GO:0140662">
    <property type="term" value="F:ATP-dependent protein folding chaperone"/>
    <property type="evidence" value="ECO:0007669"/>
    <property type="project" value="InterPro"/>
</dbReference>
<dbReference type="GO" id="GO:0051082">
    <property type="term" value="F:unfolded protein binding"/>
    <property type="evidence" value="ECO:0007669"/>
    <property type="project" value="InterPro"/>
</dbReference>
<dbReference type="CDD" id="cd10234">
    <property type="entry name" value="ASKHA_NBD_HSP70_DnaK-like"/>
    <property type="match status" value="1"/>
</dbReference>
<dbReference type="FunFam" id="2.60.34.10:FF:000014">
    <property type="entry name" value="Chaperone protein DnaK HSP70"/>
    <property type="match status" value="1"/>
</dbReference>
<dbReference type="FunFam" id="1.20.1270.10:FF:000001">
    <property type="entry name" value="Molecular chaperone DnaK"/>
    <property type="match status" value="1"/>
</dbReference>
<dbReference type="FunFam" id="3.30.420.40:FF:000071">
    <property type="entry name" value="Molecular chaperone DnaK"/>
    <property type="match status" value="1"/>
</dbReference>
<dbReference type="FunFam" id="3.90.640.10:FF:000003">
    <property type="entry name" value="Molecular chaperone DnaK"/>
    <property type="match status" value="1"/>
</dbReference>
<dbReference type="Gene3D" id="1.20.1270.10">
    <property type="match status" value="1"/>
</dbReference>
<dbReference type="Gene3D" id="3.30.420.40">
    <property type="match status" value="2"/>
</dbReference>
<dbReference type="Gene3D" id="3.90.640.10">
    <property type="entry name" value="Actin, Chain A, domain 4"/>
    <property type="match status" value="1"/>
</dbReference>
<dbReference type="Gene3D" id="2.60.34.10">
    <property type="entry name" value="Substrate Binding Domain Of DNAk, Chain A, domain 1"/>
    <property type="match status" value="1"/>
</dbReference>
<dbReference type="HAMAP" id="MF_00332">
    <property type="entry name" value="DnaK"/>
    <property type="match status" value="1"/>
</dbReference>
<dbReference type="InterPro" id="IPR043129">
    <property type="entry name" value="ATPase_NBD"/>
</dbReference>
<dbReference type="InterPro" id="IPR012725">
    <property type="entry name" value="Chaperone_DnaK"/>
</dbReference>
<dbReference type="InterPro" id="IPR018181">
    <property type="entry name" value="Heat_shock_70_CS"/>
</dbReference>
<dbReference type="InterPro" id="IPR029048">
    <property type="entry name" value="HSP70_C_sf"/>
</dbReference>
<dbReference type="InterPro" id="IPR029047">
    <property type="entry name" value="HSP70_peptide-bd_sf"/>
</dbReference>
<dbReference type="InterPro" id="IPR013126">
    <property type="entry name" value="Hsp_70_fam"/>
</dbReference>
<dbReference type="NCBIfam" id="NF001413">
    <property type="entry name" value="PRK00290.1"/>
    <property type="match status" value="1"/>
</dbReference>
<dbReference type="NCBIfam" id="TIGR02350">
    <property type="entry name" value="prok_dnaK"/>
    <property type="match status" value="1"/>
</dbReference>
<dbReference type="PANTHER" id="PTHR19375">
    <property type="entry name" value="HEAT SHOCK PROTEIN 70KDA"/>
    <property type="match status" value="1"/>
</dbReference>
<dbReference type="Pfam" id="PF00012">
    <property type="entry name" value="HSP70"/>
    <property type="match status" value="1"/>
</dbReference>
<dbReference type="PRINTS" id="PR00301">
    <property type="entry name" value="HEATSHOCK70"/>
</dbReference>
<dbReference type="SUPFAM" id="SSF53067">
    <property type="entry name" value="Actin-like ATPase domain"/>
    <property type="match status" value="2"/>
</dbReference>
<dbReference type="SUPFAM" id="SSF100934">
    <property type="entry name" value="Heat shock protein 70kD (HSP70), C-terminal subdomain"/>
    <property type="match status" value="1"/>
</dbReference>
<dbReference type="SUPFAM" id="SSF100920">
    <property type="entry name" value="Heat shock protein 70kD (HSP70), peptide-binding domain"/>
    <property type="match status" value="1"/>
</dbReference>
<dbReference type="PROSITE" id="PS00297">
    <property type="entry name" value="HSP70_1"/>
    <property type="match status" value="1"/>
</dbReference>
<dbReference type="PROSITE" id="PS00329">
    <property type="entry name" value="HSP70_2"/>
    <property type="match status" value="1"/>
</dbReference>
<dbReference type="PROSITE" id="PS01036">
    <property type="entry name" value="HSP70_3"/>
    <property type="match status" value="1"/>
</dbReference>
<reference key="1">
    <citation type="journal article" date="2006" name="Science">
        <title>Genome of rice cluster I archaea -- the key methane producers in the rice rhizosphere.</title>
        <authorList>
            <person name="Erkel C."/>
            <person name="Kube M."/>
            <person name="Reinhardt R."/>
            <person name="Liesack W."/>
        </authorList>
    </citation>
    <scope>NUCLEOTIDE SEQUENCE [LARGE SCALE GENOMIC DNA]</scope>
    <source>
        <strain>DSM 22066 / NBRC 105507 / MRE50</strain>
    </source>
</reference>
<organism>
    <name type="scientific">Methanocella arvoryzae (strain DSM 22066 / NBRC 105507 / MRE50)</name>
    <dbReference type="NCBI Taxonomy" id="351160"/>
    <lineage>
        <taxon>Archaea</taxon>
        <taxon>Methanobacteriati</taxon>
        <taxon>Methanobacteriota</taxon>
        <taxon>Stenosarchaea group</taxon>
        <taxon>Methanomicrobia</taxon>
        <taxon>Methanocellales</taxon>
        <taxon>Methanocellaceae</taxon>
        <taxon>Methanocella</taxon>
    </lineage>
</organism>
<name>DNAK_METAR</name>
<proteinExistence type="inferred from homology"/>
<protein>
    <recommendedName>
        <fullName evidence="1">Chaperone protein DnaK</fullName>
    </recommendedName>
    <alternativeName>
        <fullName evidence="1">HSP70</fullName>
    </alternativeName>
    <alternativeName>
        <fullName evidence="1">Heat shock 70 kDa protein</fullName>
    </alternativeName>
    <alternativeName>
        <fullName evidence="1">Heat shock protein 70</fullName>
    </alternativeName>
</protein>